<name>PURA_LODEL</name>
<proteinExistence type="inferred from homology"/>
<organism>
    <name type="scientific">Lodderomyces elongisporus (strain ATCC 11503 / CBS 2605 / JCM 1781 / NBRC 1676 / NRRL YB-4239)</name>
    <name type="common">Yeast</name>
    <name type="synonym">Saccharomyces elongisporus</name>
    <dbReference type="NCBI Taxonomy" id="379508"/>
    <lineage>
        <taxon>Eukaryota</taxon>
        <taxon>Fungi</taxon>
        <taxon>Dikarya</taxon>
        <taxon>Ascomycota</taxon>
        <taxon>Saccharomycotina</taxon>
        <taxon>Pichiomycetes</taxon>
        <taxon>Debaryomycetaceae</taxon>
        <taxon>Candida/Lodderomyces clade</taxon>
        <taxon>Lodderomyces</taxon>
    </lineage>
</organism>
<sequence length="428" mass="47980">MCDVVLGSQWGDEGKGKLVDILCDDIDVCARCAGGNNAGHTIVVDGKKFDFHMLPSGLVNPKCQNLVGSGVVIHVPSFFEELKNIEEKGLHCRDRLKVSSRAHLVFDFHQRTDKLKEAELSENKKSIGTTGKGIGPTYSTKASRSGIRVHHLVNSNPEAWNEFKTRYMRLVESRQKRYGEFDYDYEAELAKYEKYREELRPFVVDSVEFMHEAIAQKKKILVEGANALMLDIDFGTYPYVTSSSTGIGGVLTGLGIPPKTIRNIYGVVKAYTTRVGEGPFPTEQLNSVGETLQDVGAEYGVTTGRKRRCGWLDLVVLKYSTLINGYTSLNITKLDVLDKFKEIQVGIAYKLNGKELKSFPEDLIDLGNVEVVYKTLPGWEQDITKIKKYEDLPENAKNYLKYIEDFLGVPIQWVGTGPARDSMLEKKI</sequence>
<dbReference type="EC" id="6.3.4.4" evidence="2"/>
<dbReference type="EMBL" id="CH981524">
    <property type="protein sequence ID" value="EDK42301.1"/>
    <property type="molecule type" value="Genomic_DNA"/>
</dbReference>
<dbReference type="SMR" id="A5DSZ3"/>
<dbReference type="FunCoup" id="A5DSZ3">
    <property type="interactions" value="775"/>
</dbReference>
<dbReference type="STRING" id="379508.A5DSZ3"/>
<dbReference type="GeneID" id="5235605"/>
<dbReference type="KEGG" id="lel:PVL30_000468"/>
<dbReference type="VEuPathDB" id="FungiDB:LELG_00479"/>
<dbReference type="eggNOG" id="KOG1355">
    <property type="taxonomic scope" value="Eukaryota"/>
</dbReference>
<dbReference type="HOGENOM" id="CLU_029848_3_2_1"/>
<dbReference type="InParanoid" id="A5DSZ3"/>
<dbReference type="OMA" id="FHHAKPI"/>
<dbReference type="OrthoDB" id="10265645at2759"/>
<dbReference type="UniPathway" id="UPA00075">
    <property type="reaction ID" value="UER00335"/>
</dbReference>
<dbReference type="Proteomes" id="UP000001996">
    <property type="component" value="Unassembled WGS sequence"/>
</dbReference>
<dbReference type="GO" id="GO:0005737">
    <property type="term" value="C:cytoplasm"/>
    <property type="evidence" value="ECO:0007669"/>
    <property type="project" value="UniProtKB-SubCell"/>
</dbReference>
<dbReference type="GO" id="GO:0004019">
    <property type="term" value="F:adenylosuccinate synthase activity"/>
    <property type="evidence" value="ECO:0007669"/>
    <property type="project" value="UniProtKB-UniRule"/>
</dbReference>
<dbReference type="GO" id="GO:0005525">
    <property type="term" value="F:GTP binding"/>
    <property type="evidence" value="ECO:0007669"/>
    <property type="project" value="UniProtKB-UniRule"/>
</dbReference>
<dbReference type="GO" id="GO:0000287">
    <property type="term" value="F:magnesium ion binding"/>
    <property type="evidence" value="ECO:0007669"/>
    <property type="project" value="UniProtKB-UniRule"/>
</dbReference>
<dbReference type="GO" id="GO:0044208">
    <property type="term" value="P:'de novo' AMP biosynthetic process"/>
    <property type="evidence" value="ECO:0007669"/>
    <property type="project" value="UniProtKB-UniRule"/>
</dbReference>
<dbReference type="GO" id="GO:0046040">
    <property type="term" value="P:IMP metabolic process"/>
    <property type="evidence" value="ECO:0007669"/>
    <property type="project" value="TreeGrafter"/>
</dbReference>
<dbReference type="CDD" id="cd03108">
    <property type="entry name" value="AdSS"/>
    <property type="match status" value="1"/>
</dbReference>
<dbReference type="FunFam" id="3.90.170.10:FF:000001">
    <property type="entry name" value="Adenylosuccinate synthetase"/>
    <property type="match status" value="1"/>
</dbReference>
<dbReference type="FunFam" id="1.10.300.10:FF:000002">
    <property type="entry name" value="Adenylosuccinate synthetase, chloroplastic"/>
    <property type="match status" value="1"/>
</dbReference>
<dbReference type="Gene3D" id="3.40.440.10">
    <property type="entry name" value="Adenylosuccinate Synthetase, subunit A, domain 1"/>
    <property type="match status" value="1"/>
</dbReference>
<dbReference type="Gene3D" id="1.10.300.10">
    <property type="entry name" value="Adenylosuccinate Synthetase, subunit A, domain 2"/>
    <property type="match status" value="1"/>
</dbReference>
<dbReference type="Gene3D" id="3.90.170.10">
    <property type="entry name" value="Adenylosuccinate Synthetase, subunit A, domain 3"/>
    <property type="match status" value="1"/>
</dbReference>
<dbReference type="HAMAP" id="MF_00011">
    <property type="entry name" value="Adenylosucc_synth"/>
    <property type="match status" value="1"/>
</dbReference>
<dbReference type="InterPro" id="IPR018220">
    <property type="entry name" value="Adenylosuccin_syn_GTP-bd"/>
</dbReference>
<dbReference type="InterPro" id="IPR033128">
    <property type="entry name" value="Adenylosuccin_syn_Lys_AS"/>
</dbReference>
<dbReference type="InterPro" id="IPR042109">
    <property type="entry name" value="Adenylosuccinate_synth_dom1"/>
</dbReference>
<dbReference type="InterPro" id="IPR042110">
    <property type="entry name" value="Adenylosuccinate_synth_dom2"/>
</dbReference>
<dbReference type="InterPro" id="IPR042111">
    <property type="entry name" value="Adenylosuccinate_synth_dom3"/>
</dbReference>
<dbReference type="InterPro" id="IPR001114">
    <property type="entry name" value="Adenylosuccinate_synthetase"/>
</dbReference>
<dbReference type="InterPro" id="IPR027417">
    <property type="entry name" value="P-loop_NTPase"/>
</dbReference>
<dbReference type="NCBIfam" id="NF002223">
    <property type="entry name" value="PRK01117.1"/>
    <property type="match status" value="1"/>
</dbReference>
<dbReference type="NCBIfam" id="TIGR00184">
    <property type="entry name" value="purA"/>
    <property type="match status" value="1"/>
</dbReference>
<dbReference type="PANTHER" id="PTHR11846">
    <property type="entry name" value="ADENYLOSUCCINATE SYNTHETASE"/>
    <property type="match status" value="1"/>
</dbReference>
<dbReference type="PANTHER" id="PTHR11846:SF0">
    <property type="entry name" value="ADENYLOSUCCINATE SYNTHETASE"/>
    <property type="match status" value="1"/>
</dbReference>
<dbReference type="Pfam" id="PF00709">
    <property type="entry name" value="Adenylsucc_synt"/>
    <property type="match status" value="1"/>
</dbReference>
<dbReference type="SMART" id="SM00788">
    <property type="entry name" value="Adenylsucc_synt"/>
    <property type="match status" value="1"/>
</dbReference>
<dbReference type="SUPFAM" id="SSF52540">
    <property type="entry name" value="P-loop containing nucleoside triphosphate hydrolases"/>
    <property type="match status" value="1"/>
</dbReference>
<dbReference type="PROSITE" id="PS01266">
    <property type="entry name" value="ADENYLOSUCCIN_SYN_1"/>
    <property type="match status" value="1"/>
</dbReference>
<dbReference type="PROSITE" id="PS00513">
    <property type="entry name" value="ADENYLOSUCCIN_SYN_2"/>
    <property type="match status" value="1"/>
</dbReference>
<feature type="chain" id="PRO_0000399341" description="Adenylosuccinate synthetase">
    <location>
        <begin position="1"/>
        <end position="428"/>
    </location>
</feature>
<feature type="active site" description="Proton acceptor" evidence="2">
    <location>
        <position position="12"/>
    </location>
</feature>
<feature type="active site" description="Proton donor" evidence="2">
    <location>
        <position position="40"/>
    </location>
</feature>
<feature type="binding site" evidence="2">
    <location>
        <begin position="11"/>
        <end position="17"/>
    </location>
    <ligand>
        <name>GTP</name>
        <dbReference type="ChEBI" id="CHEBI:37565"/>
    </ligand>
</feature>
<feature type="binding site" description="in other chain" evidence="2">
    <location>
        <begin position="12"/>
        <end position="15"/>
    </location>
    <ligand>
        <name>IMP</name>
        <dbReference type="ChEBI" id="CHEBI:58053"/>
        <note>ligand shared between dimeric partners</note>
    </ligand>
</feature>
<feature type="binding site" evidence="2">
    <location>
        <position position="12"/>
    </location>
    <ligand>
        <name>Mg(2+)</name>
        <dbReference type="ChEBI" id="CHEBI:18420"/>
    </ligand>
</feature>
<feature type="binding site" description="in other chain" evidence="2">
    <location>
        <begin position="37"/>
        <end position="40"/>
    </location>
    <ligand>
        <name>IMP</name>
        <dbReference type="ChEBI" id="CHEBI:58053"/>
        <note>ligand shared between dimeric partners</note>
    </ligand>
</feature>
<feature type="binding site" evidence="2">
    <location>
        <begin position="39"/>
        <end position="41"/>
    </location>
    <ligand>
        <name>GTP</name>
        <dbReference type="ChEBI" id="CHEBI:37565"/>
    </ligand>
</feature>
<feature type="binding site" evidence="2">
    <location>
        <position position="39"/>
    </location>
    <ligand>
        <name>Mg(2+)</name>
        <dbReference type="ChEBI" id="CHEBI:18420"/>
    </ligand>
</feature>
<feature type="binding site" description="in other chain" evidence="2">
    <location>
        <position position="130"/>
    </location>
    <ligand>
        <name>IMP</name>
        <dbReference type="ChEBI" id="CHEBI:58053"/>
        <note>ligand shared between dimeric partners</note>
    </ligand>
</feature>
<feature type="binding site" evidence="2">
    <location>
        <position position="144"/>
    </location>
    <ligand>
        <name>IMP</name>
        <dbReference type="ChEBI" id="CHEBI:58053"/>
        <note>ligand shared between dimeric partners</note>
    </ligand>
</feature>
<feature type="binding site" description="in other chain" evidence="2">
    <location>
        <position position="226"/>
    </location>
    <ligand>
        <name>IMP</name>
        <dbReference type="ChEBI" id="CHEBI:58053"/>
        <note>ligand shared between dimeric partners</note>
    </ligand>
</feature>
<feature type="binding site" description="in other chain" evidence="2">
    <location>
        <position position="241"/>
    </location>
    <ligand>
        <name>IMP</name>
        <dbReference type="ChEBI" id="CHEBI:58053"/>
        <note>ligand shared between dimeric partners</note>
    </ligand>
</feature>
<feature type="binding site" evidence="2">
    <location>
        <begin position="301"/>
        <end position="307"/>
    </location>
    <ligand>
        <name>substrate</name>
    </ligand>
</feature>
<feature type="binding site" description="in other chain" evidence="2">
    <location>
        <position position="305"/>
    </location>
    <ligand>
        <name>IMP</name>
        <dbReference type="ChEBI" id="CHEBI:58053"/>
        <note>ligand shared between dimeric partners</note>
    </ligand>
</feature>
<feature type="binding site" evidence="2">
    <location>
        <position position="307"/>
    </location>
    <ligand>
        <name>GTP</name>
        <dbReference type="ChEBI" id="CHEBI:37565"/>
    </ligand>
</feature>
<feature type="binding site" evidence="2">
    <location>
        <begin position="333"/>
        <end position="335"/>
    </location>
    <ligand>
        <name>GTP</name>
        <dbReference type="ChEBI" id="CHEBI:37565"/>
    </ligand>
</feature>
<feature type="binding site" evidence="2">
    <location>
        <begin position="415"/>
        <end position="417"/>
    </location>
    <ligand>
        <name>GTP</name>
        <dbReference type="ChEBI" id="CHEBI:37565"/>
    </ligand>
</feature>
<evidence type="ECO:0000250" key="1"/>
<evidence type="ECO:0000255" key="2">
    <source>
        <dbReference type="HAMAP-Rule" id="MF_03125"/>
    </source>
</evidence>
<comment type="function">
    <text evidence="1">Plays an important role in the de novo pathway and in the salvage pathway of purine nucleotide biosynthesis. Catalyzes the first committed step in the biosynthesis of AMP from IMP (By similarity).</text>
</comment>
<comment type="catalytic activity">
    <reaction evidence="2">
        <text>IMP + L-aspartate + GTP = N(6)-(1,2-dicarboxyethyl)-AMP + GDP + phosphate + 2 H(+)</text>
        <dbReference type="Rhea" id="RHEA:15753"/>
        <dbReference type="ChEBI" id="CHEBI:15378"/>
        <dbReference type="ChEBI" id="CHEBI:29991"/>
        <dbReference type="ChEBI" id="CHEBI:37565"/>
        <dbReference type="ChEBI" id="CHEBI:43474"/>
        <dbReference type="ChEBI" id="CHEBI:57567"/>
        <dbReference type="ChEBI" id="CHEBI:58053"/>
        <dbReference type="ChEBI" id="CHEBI:58189"/>
        <dbReference type="EC" id="6.3.4.4"/>
    </reaction>
</comment>
<comment type="cofactor">
    <cofactor evidence="2">
        <name>Mg(2+)</name>
        <dbReference type="ChEBI" id="CHEBI:18420"/>
    </cofactor>
    <text evidence="2">Binds 1 Mg(2+) ion per subunit.</text>
</comment>
<comment type="pathway">
    <text evidence="2">Purine metabolism; AMP biosynthesis via de novo pathway; AMP from IMP: step 1/2.</text>
</comment>
<comment type="subunit">
    <text evidence="2">Homodimer.</text>
</comment>
<comment type="subcellular location">
    <subcellularLocation>
        <location evidence="2">Cytoplasm</location>
    </subcellularLocation>
</comment>
<comment type="similarity">
    <text evidence="2">Belongs to the adenylosuccinate synthetase family.</text>
</comment>
<reference key="1">
    <citation type="journal article" date="2009" name="Nature">
        <title>Evolution of pathogenicity and sexual reproduction in eight Candida genomes.</title>
        <authorList>
            <person name="Butler G."/>
            <person name="Rasmussen M.D."/>
            <person name="Lin M.F."/>
            <person name="Santos M.A.S."/>
            <person name="Sakthikumar S."/>
            <person name="Munro C.A."/>
            <person name="Rheinbay E."/>
            <person name="Grabherr M."/>
            <person name="Forche A."/>
            <person name="Reedy J.L."/>
            <person name="Agrafioti I."/>
            <person name="Arnaud M.B."/>
            <person name="Bates S."/>
            <person name="Brown A.J.P."/>
            <person name="Brunke S."/>
            <person name="Costanzo M.C."/>
            <person name="Fitzpatrick D.A."/>
            <person name="de Groot P.W.J."/>
            <person name="Harris D."/>
            <person name="Hoyer L.L."/>
            <person name="Hube B."/>
            <person name="Klis F.M."/>
            <person name="Kodira C."/>
            <person name="Lennard N."/>
            <person name="Logue M.E."/>
            <person name="Martin R."/>
            <person name="Neiman A.M."/>
            <person name="Nikolaou E."/>
            <person name="Quail M.A."/>
            <person name="Quinn J."/>
            <person name="Santos M.C."/>
            <person name="Schmitzberger F.F."/>
            <person name="Sherlock G."/>
            <person name="Shah P."/>
            <person name="Silverstein K.A.T."/>
            <person name="Skrzypek M.S."/>
            <person name="Soll D."/>
            <person name="Staggs R."/>
            <person name="Stansfield I."/>
            <person name="Stumpf M.P.H."/>
            <person name="Sudbery P.E."/>
            <person name="Srikantha T."/>
            <person name="Zeng Q."/>
            <person name="Berman J."/>
            <person name="Berriman M."/>
            <person name="Heitman J."/>
            <person name="Gow N.A.R."/>
            <person name="Lorenz M.C."/>
            <person name="Birren B.W."/>
            <person name="Kellis M."/>
            <person name="Cuomo C.A."/>
        </authorList>
    </citation>
    <scope>NUCLEOTIDE SEQUENCE [LARGE SCALE GENOMIC DNA]</scope>
    <source>
        <strain>ATCC 11503 / BCRC 21390 / CBS 2605 / JCM 1781 / NBRC 1676 / NRRL YB-4239</strain>
    </source>
</reference>
<keyword id="KW-0963">Cytoplasm</keyword>
<keyword id="KW-0342">GTP-binding</keyword>
<keyword id="KW-0436">Ligase</keyword>
<keyword id="KW-0460">Magnesium</keyword>
<keyword id="KW-0479">Metal-binding</keyword>
<keyword id="KW-0547">Nucleotide-binding</keyword>
<keyword id="KW-0658">Purine biosynthesis</keyword>
<keyword id="KW-1185">Reference proteome</keyword>
<gene>
    <name type="ORF">LELG_00479</name>
</gene>
<accession>A5DSZ3</accession>
<protein>
    <recommendedName>
        <fullName evidence="2">Adenylosuccinate synthetase</fullName>
        <shortName evidence="2">AMPSase</shortName>
        <shortName evidence="2">AdSS</shortName>
        <ecNumber evidence="2">6.3.4.4</ecNumber>
    </recommendedName>
    <alternativeName>
        <fullName evidence="2">IMP--aspartate ligase</fullName>
    </alternativeName>
</protein>